<name>Y2391_CERSK</name>
<accession>B9KNE5</accession>
<sequence>MDLSGSLLIAMPSMADPRFERSLVLICAHSPDGAMGLVINKPVEDLSFAGMLEQLNIPRAPNGRDIRVHLGGPMERGRGFVLHSPDYMSVGATMLVSGKFGMTATVDILEALARGQGPSSALMALGYSGWGPGQVEAEVQRNDWLTAEAPSELVFSDDDPGKWTGMLRHMGIDPLTLSSTAGHA</sequence>
<dbReference type="EMBL" id="CP001150">
    <property type="protein sequence ID" value="ACM02251.1"/>
    <property type="molecule type" value="Genomic_DNA"/>
</dbReference>
<dbReference type="RefSeq" id="WP_015921388.1">
    <property type="nucleotide sequence ID" value="NC_011963.1"/>
</dbReference>
<dbReference type="SMR" id="B9KNE5"/>
<dbReference type="GeneID" id="67447771"/>
<dbReference type="KEGG" id="rsk:RSKD131_2391"/>
<dbReference type="HOGENOM" id="CLU_057596_1_0_5"/>
<dbReference type="GO" id="GO:0005829">
    <property type="term" value="C:cytosol"/>
    <property type="evidence" value="ECO:0007669"/>
    <property type="project" value="TreeGrafter"/>
</dbReference>
<dbReference type="Gene3D" id="3.40.1740.10">
    <property type="entry name" value="VC0467-like"/>
    <property type="match status" value="1"/>
</dbReference>
<dbReference type="HAMAP" id="MF_00758">
    <property type="entry name" value="UPF0301"/>
    <property type="match status" value="1"/>
</dbReference>
<dbReference type="InterPro" id="IPR003774">
    <property type="entry name" value="AlgH-like"/>
</dbReference>
<dbReference type="NCBIfam" id="NF001268">
    <property type="entry name" value="PRK00228.1-4"/>
    <property type="match status" value="1"/>
</dbReference>
<dbReference type="PANTHER" id="PTHR30327">
    <property type="entry name" value="UNCHARACTERIZED PROTEIN YQGE"/>
    <property type="match status" value="1"/>
</dbReference>
<dbReference type="PANTHER" id="PTHR30327:SF1">
    <property type="entry name" value="UPF0301 PROTEIN YQGE"/>
    <property type="match status" value="1"/>
</dbReference>
<dbReference type="Pfam" id="PF02622">
    <property type="entry name" value="DUF179"/>
    <property type="match status" value="1"/>
</dbReference>
<dbReference type="SUPFAM" id="SSF143456">
    <property type="entry name" value="VC0467-like"/>
    <property type="match status" value="1"/>
</dbReference>
<comment type="similarity">
    <text evidence="1">Belongs to the UPF0301 (AlgH) family.</text>
</comment>
<organism>
    <name type="scientific">Cereibacter sphaeroides (strain KD131 / KCTC 12085)</name>
    <name type="common">Rhodobacter sphaeroides</name>
    <dbReference type="NCBI Taxonomy" id="557760"/>
    <lineage>
        <taxon>Bacteria</taxon>
        <taxon>Pseudomonadati</taxon>
        <taxon>Pseudomonadota</taxon>
        <taxon>Alphaproteobacteria</taxon>
        <taxon>Rhodobacterales</taxon>
        <taxon>Paracoccaceae</taxon>
        <taxon>Cereibacter</taxon>
    </lineage>
</organism>
<protein>
    <recommendedName>
        <fullName evidence="1">UPF0301 protein RSKD131_2391</fullName>
    </recommendedName>
</protein>
<feature type="chain" id="PRO_1000148392" description="UPF0301 protein RSKD131_2391">
    <location>
        <begin position="1"/>
        <end position="184"/>
    </location>
</feature>
<gene>
    <name type="ordered locus">RSKD131_2391</name>
</gene>
<evidence type="ECO:0000255" key="1">
    <source>
        <dbReference type="HAMAP-Rule" id="MF_00758"/>
    </source>
</evidence>
<reference key="1">
    <citation type="journal article" date="2009" name="J. Bacteriol.">
        <title>Complete genome sequence of Rhodobacter sphaeroides KD131.</title>
        <authorList>
            <person name="Lim S.-K."/>
            <person name="Kim S.J."/>
            <person name="Cha S.H."/>
            <person name="Oh Y.-K."/>
            <person name="Rhee H.-J."/>
            <person name="Kim M.-S."/>
            <person name="Lee J.K."/>
        </authorList>
    </citation>
    <scope>NUCLEOTIDE SEQUENCE [LARGE SCALE GENOMIC DNA]</scope>
    <source>
        <strain>KD131 / KCTC 12085</strain>
    </source>
</reference>
<proteinExistence type="inferred from homology"/>